<evidence type="ECO:0000255" key="1">
    <source>
        <dbReference type="HAMAP-Rule" id="MF_01216"/>
    </source>
</evidence>
<name>AZOR_SHEON</name>
<reference key="1">
    <citation type="journal article" date="2002" name="Nat. Biotechnol.">
        <title>Genome sequence of the dissimilatory metal ion-reducing bacterium Shewanella oneidensis.</title>
        <authorList>
            <person name="Heidelberg J.F."/>
            <person name="Paulsen I.T."/>
            <person name="Nelson K.E."/>
            <person name="Gaidos E.J."/>
            <person name="Nelson W.C."/>
            <person name="Read T.D."/>
            <person name="Eisen J.A."/>
            <person name="Seshadri R."/>
            <person name="Ward N.L."/>
            <person name="Methe B.A."/>
            <person name="Clayton R.A."/>
            <person name="Meyer T."/>
            <person name="Tsapin A."/>
            <person name="Scott J."/>
            <person name="Beanan M.J."/>
            <person name="Brinkac L.M."/>
            <person name="Daugherty S.C."/>
            <person name="DeBoy R.T."/>
            <person name="Dodson R.J."/>
            <person name="Durkin A.S."/>
            <person name="Haft D.H."/>
            <person name="Kolonay J.F."/>
            <person name="Madupu R."/>
            <person name="Peterson J.D."/>
            <person name="Umayam L.A."/>
            <person name="White O."/>
            <person name="Wolf A.M."/>
            <person name="Vamathevan J.J."/>
            <person name="Weidman J.F."/>
            <person name="Impraim M."/>
            <person name="Lee K."/>
            <person name="Berry K.J."/>
            <person name="Lee C."/>
            <person name="Mueller J."/>
            <person name="Khouri H.M."/>
            <person name="Gill J."/>
            <person name="Utterback T.R."/>
            <person name="McDonald L.A."/>
            <person name="Feldblyum T.V."/>
            <person name="Smith H.O."/>
            <person name="Venter J.C."/>
            <person name="Nealson K.H."/>
            <person name="Fraser C.M."/>
        </authorList>
    </citation>
    <scope>NUCLEOTIDE SEQUENCE [LARGE SCALE GENOMIC DNA]</scope>
    <source>
        <strain>ATCC 700550 / JCM 31522 / CIP 106686 / LMG 19005 / NCIMB 14063 / MR-1</strain>
    </source>
</reference>
<sequence>MSKVLVLKSSILGGYSQSALLVDYLIGKWEKQGATITVRDLAGKDVLPMVDGEIASGLRGGAELTARQQEMLDLSNALVEELKANDTIVITAPMYNFNIPTQLKNWIDFVARAGVTFTYTENGPKGLVEGKRAVLITTRGGAHKDGPTDHMVPFLKTFLGFIGITDVDVVYAEALNMGPEANQKGISEAKASIDKLAV</sequence>
<feature type="chain" id="PRO_0000245969" description="FMN-dependent NADH:quinone oxidoreductase">
    <location>
        <begin position="1"/>
        <end position="198"/>
    </location>
</feature>
<feature type="binding site" evidence="1">
    <location>
        <position position="10"/>
    </location>
    <ligand>
        <name>FMN</name>
        <dbReference type="ChEBI" id="CHEBI:58210"/>
    </ligand>
</feature>
<feature type="binding site" evidence="1">
    <location>
        <begin position="16"/>
        <end position="18"/>
    </location>
    <ligand>
        <name>FMN</name>
        <dbReference type="ChEBI" id="CHEBI:58210"/>
    </ligand>
</feature>
<feature type="binding site" evidence="1">
    <location>
        <begin position="94"/>
        <end position="97"/>
    </location>
    <ligand>
        <name>FMN</name>
        <dbReference type="ChEBI" id="CHEBI:58210"/>
    </ligand>
</feature>
<feature type="binding site" evidence="1">
    <location>
        <begin position="138"/>
        <end position="141"/>
    </location>
    <ligand>
        <name>FMN</name>
        <dbReference type="ChEBI" id="CHEBI:58210"/>
    </ligand>
</feature>
<accession>Q8E990</accession>
<proteinExistence type="inferred from homology"/>
<organism>
    <name type="scientific">Shewanella oneidensis (strain ATCC 700550 / JCM 31522 / CIP 106686 / LMG 19005 / NCIMB 14063 / MR-1)</name>
    <dbReference type="NCBI Taxonomy" id="211586"/>
    <lineage>
        <taxon>Bacteria</taxon>
        <taxon>Pseudomonadati</taxon>
        <taxon>Pseudomonadota</taxon>
        <taxon>Gammaproteobacteria</taxon>
        <taxon>Alteromonadales</taxon>
        <taxon>Shewanellaceae</taxon>
        <taxon>Shewanella</taxon>
    </lineage>
</organism>
<comment type="function">
    <text evidence="1">Quinone reductase that provides resistance to thiol-specific stress caused by electrophilic quinones.</text>
</comment>
<comment type="function">
    <text evidence="1">Also exhibits azoreductase activity. Catalyzes the reductive cleavage of the azo bond in aromatic azo compounds to the corresponding amines.</text>
</comment>
<comment type="catalytic activity">
    <reaction evidence="1">
        <text>2 a quinone + NADH + H(+) = 2 a 1,4-benzosemiquinone + NAD(+)</text>
        <dbReference type="Rhea" id="RHEA:65952"/>
        <dbReference type="ChEBI" id="CHEBI:15378"/>
        <dbReference type="ChEBI" id="CHEBI:57540"/>
        <dbReference type="ChEBI" id="CHEBI:57945"/>
        <dbReference type="ChEBI" id="CHEBI:132124"/>
        <dbReference type="ChEBI" id="CHEBI:134225"/>
    </reaction>
</comment>
<comment type="catalytic activity">
    <reaction evidence="1">
        <text>N,N-dimethyl-1,4-phenylenediamine + anthranilate + 2 NAD(+) = 2-(4-dimethylaminophenyl)diazenylbenzoate + 2 NADH + 2 H(+)</text>
        <dbReference type="Rhea" id="RHEA:55872"/>
        <dbReference type="ChEBI" id="CHEBI:15378"/>
        <dbReference type="ChEBI" id="CHEBI:15783"/>
        <dbReference type="ChEBI" id="CHEBI:16567"/>
        <dbReference type="ChEBI" id="CHEBI:57540"/>
        <dbReference type="ChEBI" id="CHEBI:57945"/>
        <dbReference type="ChEBI" id="CHEBI:71579"/>
        <dbReference type="EC" id="1.7.1.17"/>
    </reaction>
</comment>
<comment type="cofactor">
    <cofactor evidence="1">
        <name>FMN</name>
        <dbReference type="ChEBI" id="CHEBI:58210"/>
    </cofactor>
    <text evidence="1">Binds 1 FMN per subunit.</text>
</comment>
<comment type="subunit">
    <text evidence="1">Homodimer.</text>
</comment>
<comment type="similarity">
    <text evidence="1">Belongs to the azoreductase type 1 family.</text>
</comment>
<dbReference type="EC" id="1.6.5.-" evidence="1"/>
<dbReference type="EC" id="1.7.1.17" evidence="1"/>
<dbReference type="EMBL" id="AE014299">
    <property type="protein sequence ID" value="AAN57363.1"/>
    <property type="molecule type" value="Genomic_DNA"/>
</dbReference>
<dbReference type="RefSeq" id="NP_719919.1">
    <property type="nucleotide sequence ID" value="NC_004347.2"/>
</dbReference>
<dbReference type="RefSeq" id="WP_011074045.1">
    <property type="nucleotide sequence ID" value="NC_004347.2"/>
</dbReference>
<dbReference type="SMR" id="Q8E990"/>
<dbReference type="STRING" id="211586.SO_4396"/>
<dbReference type="PaxDb" id="211586-SO_4396"/>
<dbReference type="KEGG" id="son:SO_4396"/>
<dbReference type="PATRIC" id="fig|211586.12.peg.4259"/>
<dbReference type="eggNOG" id="COG1182">
    <property type="taxonomic scope" value="Bacteria"/>
</dbReference>
<dbReference type="HOGENOM" id="CLU_088964_0_0_6"/>
<dbReference type="OrthoDB" id="9787136at2"/>
<dbReference type="PhylomeDB" id="Q8E990"/>
<dbReference type="BioCyc" id="SONE211586:G1GMP-4066-MONOMER"/>
<dbReference type="BRENDA" id="1.7.1.6">
    <property type="organism ID" value="5706"/>
</dbReference>
<dbReference type="Proteomes" id="UP000008186">
    <property type="component" value="Chromosome"/>
</dbReference>
<dbReference type="GO" id="GO:0009055">
    <property type="term" value="F:electron transfer activity"/>
    <property type="evidence" value="ECO:0007669"/>
    <property type="project" value="UniProtKB-UniRule"/>
</dbReference>
<dbReference type="GO" id="GO:0010181">
    <property type="term" value="F:FMN binding"/>
    <property type="evidence" value="ECO:0007669"/>
    <property type="project" value="UniProtKB-UniRule"/>
</dbReference>
<dbReference type="GO" id="GO:0016652">
    <property type="term" value="F:oxidoreductase activity, acting on NAD(P)H as acceptor"/>
    <property type="evidence" value="ECO:0007669"/>
    <property type="project" value="UniProtKB-UniRule"/>
</dbReference>
<dbReference type="GO" id="GO:0016655">
    <property type="term" value="F:oxidoreductase activity, acting on NAD(P)H, quinone or similar compound as acceptor"/>
    <property type="evidence" value="ECO:0007669"/>
    <property type="project" value="InterPro"/>
</dbReference>
<dbReference type="FunFam" id="3.40.50.360:FF:000010">
    <property type="entry name" value="FMN-dependent NADH-azoreductase"/>
    <property type="match status" value="1"/>
</dbReference>
<dbReference type="Gene3D" id="3.40.50.360">
    <property type="match status" value="1"/>
</dbReference>
<dbReference type="HAMAP" id="MF_01216">
    <property type="entry name" value="Azoreductase_type1"/>
    <property type="match status" value="1"/>
</dbReference>
<dbReference type="InterPro" id="IPR003680">
    <property type="entry name" value="Flavodoxin_fold"/>
</dbReference>
<dbReference type="InterPro" id="IPR029039">
    <property type="entry name" value="Flavoprotein-like_sf"/>
</dbReference>
<dbReference type="InterPro" id="IPR050104">
    <property type="entry name" value="FMN-dep_NADH:Q_OxRdtase_AzoR1"/>
</dbReference>
<dbReference type="InterPro" id="IPR023048">
    <property type="entry name" value="NADH:quinone_OxRdtase_FMN_depd"/>
</dbReference>
<dbReference type="PANTHER" id="PTHR43741">
    <property type="entry name" value="FMN-DEPENDENT NADH-AZOREDUCTASE 1"/>
    <property type="match status" value="1"/>
</dbReference>
<dbReference type="PANTHER" id="PTHR43741:SF2">
    <property type="entry name" value="FMN-DEPENDENT NADH:QUINONE OXIDOREDUCTASE"/>
    <property type="match status" value="1"/>
</dbReference>
<dbReference type="Pfam" id="PF02525">
    <property type="entry name" value="Flavodoxin_2"/>
    <property type="match status" value="1"/>
</dbReference>
<dbReference type="SUPFAM" id="SSF52218">
    <property type="entry name" value="Flavoproteins"/>
    <property type="match status" value="1"/>
</dbReference>
<gene>
    <name evidence="1" type="primary">azoR</name>
    <name type="ordered locus">SO_4396</name>
</gene>
<protein>
    <recommendedName>
        <fullName evidence="1">FMN-dependent NADH:quinone oxidoreductase</fullName>
        <ecNumber evidence="1">1.6.5.-</ecNumber>
    </recommendedName>
    <alternativeName>
        <fullName evidence="1">Azo-dye reductase</fullName>
    </alternativeName>
    <alternativeName>
        <fullName evidence="1">FMN-dependent NADH-azo compound oxidoreductase</fullName>
    </alternativeName>
    <alternativeName>
        <fullName evidence="1">FMN-dependent NADH-azoreductase</fullName>
        <ecNumber evidence="1">1.7.1.17</ecNumber>
    </alternativeName>
</protein>
<keyword id="KW-0285">Flavoprotein</keyword>
<keyword id="KW-0288">FMN</keyword>
<keyword id="KW-0520">NAD</keyword>
<keyword id="KW-0560">Oxidoreductase</keyword>
<keyword id="KW-1185">Reference proteome</keyword>